<sequence length="591" mass="63165">MGFNIPWNGTQAEYHVTHCFLPSDKIDLISFSTSTSQFCNGRPFKFVPAALPSILPQAKPITTDQTQAPPPALAQPSLSFTQGLLVGQLSVVLLIGAFIKFFIFGEAPPPPSRSGLYNRTSSHRRSYSINAISTDFSPRTLREKPSTSNILRPVPSSSTNTRSILRKTYYSATPTNPTSKHGRSRVHHSSHQPESLDWFNVLIAQTIAQYRQTAYILKDSPTSSILASLSEALNNPEKKPSFIDTIKVTDISLGEEFPIFSNCRVIAVEDPNSDGGRLQALMDVDLSDDNLSLAVETSLLLNYPKPFSAVLPVALAVSVVRFSGTLCISFVPGPGTSDQTMGPSASPPNQSTSTETASINDQTSEGQSTQRHTFHQHKPTNSTPTAATADDAHTKHAHGIPKTSLAFSFLPDYRLDLSVRSLIGSRSRLQDVPKVAQLVEARMQAWFEERVVEPRVQVVGLPNIWPRMGRTGVRGSQEEAEARAGVGSVPVDIPGTAGGDGMRGRGGGGGGGGLRGNSSGRGMGYDGLRYRPNAHGDGGTGVVQGQGAGGIFCEAGPQNQNRGGDDGEGPGRRSDERFAMPGSMPDSVAVT</sequence>
<organism>
    <name type="scientific">Ajellomyces capsulatus (strain G186AR / H82 / ATCC MYA-2454 / RMSCC 2432)</name>
    <name type="common">Darling's disease fungus</name>
    <name type="synonym">Histoplasma capsulatum</name>
    <dbReference type="NCBI Taxonomy" id="447093"/>
    <lineage>
        <taxon>Eukaryota</taxon>
        <taxon>Fungi</taxon>
        <taxon>Dikarya</taxon>
        <taxon>Ascomycota</taxon>
        <taxon>Pezizomycotina</taxon>
        <taxon>Eurotiomycetes</taxon>
        <taxon>Eurotiomycetidae</taxon>
        <taxon>Onygenales</taxon>
        <taxon>Ajellomycetaceae</taxon>
        <taxon>Histoplasma</taxon>
    </lineage>
</organism>
<evidence type="ECO:0000255" key="1">
    <source>
        <dbReference type="HAMAP-Rule" id="MF_03103"/>
    </source>
</evidence>
<evidence type="ECO:0000256" key="2">
    <source>
        <dbReference type="SAM" id="MobiDB-lite"/>
    </source>
</evidence>
<proteinExistence type="inferred from homology"/>
<comment type="function">
    <text evidence="1">Component of the ERMES/MDM complex, which serves as a molecular tether to connect the endoplasmic reticulum (ER) and mitochondria. Components of this complex are involved in the control of mitochondrial shape and protein biogenesis, and function in nonvesicular lipid trafficking between the ER and mitochondria. The MDM12-MMM1 subcomplex functions in the major beta-barrel assembly pathway that is responsible for biogenesis of all outer membrane beta-barrel proteins, and acts in a late step after the SAM complex. The MDM10-MDM12-MMM1 subcomplex further acts in the TOM40-specific pathway after the action of the MDM12-MMM1 complex. Essential for establishing and maintaining the structure of mitochondria and maintenance of mtDNA nucleoids.</text>
</comment>
<comment type="subunit">
    <text evidence="1">Homodimer. Component of the ER-mitochondria encounter structure (ERMES) or MDM complex, composed of MMM1, MDM10, MDM12 and MDM34. A MMM1 homodimer associates with one molecule of MDM12 on each side in a pairwise head-to-tail manner, and the SMP-LTD domains of MMM1 and MDM12 generate a continuous hydrophobic tunnel for phospholipid trafficking.</text>
</comment>
<comment type="subcellular location">
    <subcellularLocation>
        <location evidence="1">Endoplasmic reticulum membrane</location>
        <topology evidence="1">Single-pass type I membrane protein</topology>
    </subcellularLocation>
    <text evidence="1">The ERMES/MDM complex localizes to a few discrete foci (around 10 per single cell), that represent mitochondria-endoplasmic reticulum junctions. These foci are often found next to mtDNA nucleoids.</text>
</comment>
<comment type="domain">
    <text evidence="1">The SMP-LTD domain is a barrel-like domain that can bind various types of glycerophospholipids in its interior and mediate their transfer between two adjacent bilayers.</text>
</comment>
<comment type="similarity">
    <text evidence="1">Belongs to the MMM1 family.</text>
</comment>
<name>MMM1_AJECG</name>
<accession>C0NZU3</accession>
<feature type="chain" id="PRO_0000384208" description="Maintenance of mitochondrial morphology protein 1">
    <location>
        <begin position="1"/>
        <end position="591"/>
    </location>
</feature>
<feature type="topological domain" description="Lumenal" evidence="1">
    <location>
        <begin position="1"/>
        <end position="83"/>
    </location>
</feature>
<feature type="transmembrane region" description="Helical" evidence="1">
    <location>
        <begin position="84"/>
        <end position="104"/>
    </location>
</feature>
<feature type="topological domain" description="Cytoplasmic" evidence="1">
    <location>
        <begin position="105"/>
        <end position="591"/>
    </location>
</feature>
<feature type="domain" description="SMP-LTD" evidence="1">
    <location>
        <begin position="192"/>
        <end position="462"/>
    </location>
</feature>
<feature type="region of interest" description="Disordered" evidence="2">
    <location>
        <begin position="138"/>
        <end position="159"/>
    </location>
</feature>
<feature type="region of interest" description="Disordered" evidence="2">
    <location>
        <begin position="170"/>
        <end position="189"/>
    </location>
</feature>
<feature type="region of interest" description="Disordered" evidence="2">
    <location>
        <begin position="334"/>
        <end position="398"/>
    </location>
</feature>
<feature type="region of interest" description="Disordered" evidence="2">
    <location>
        <begin position="479"/>
        <end position="591"/>
    </location>
</feature>
<feature type="compositionally biased region" description="Polar residues" evidence="2">
    <location>
        <begin position="146"/>
        <end position="159"/>
    </location>
</feature>
<feature type="compositionally biased region" description="Polar residues" evidence="2">
    <location>
        <begin position="170"/>
        <end position="179"/>
    </location>
</feature>
<feature type="compositionally biased region" description="Basic residues" evidence="2">
    <location>
        <begin position="180"/>
        <end position="189"/>
    </location>
</feature>
<feature type="compositionally biased region" description="Polar residues" evidence="2">
    <location>
        <begin position="336"/>
        <end position="371"/>
    </location>
</feature>
<feature type="compositionally biased region" description="Low complexity" evidence="2">
    <location>
        <begin position="379"/>
        <end position="389"/>
    </location>
</feature>
<feature type="compositionally biased region" description="Gly residues" evidence="2">
    <location>
        <begin position="496"/>
        <end position="525"/>
    </location>
</feature>
<feature type="compositionally biased region" description="Gly residues" evidence="2">
    <location>
        <begin position="536"/>
        <end position="550"/>
    </location>
</feature>
<feature type="compositionally biased region" description="Basic and acidic residues" evidence="2">
    <location>
        <begin position="563"/>
        <end position="578"/>
    </location>
</feature>
<reference key="1">
    <citation type="submission" date="2009-02" db="EMBL/GenBank/DDBJ databases">
        <title>The genome sequence of Ajellomyces capsulatus strain G186AR.</title>
        <authorList>
            <person name="Champion M."/>
            <person name="Cuomo C.A."/>
            <person name="Ma L.-J."/>
            <person name="Henn M.R."/>
            <person name="Sil A."/>
            <person name="Goldman B."/>
            <person name="Young S.K."/>
            <person name="Kodira C.D."/>
            <person name="Zeng Q."/>
            <person name="Koehrsen M."/>
            <person name="Alvarado L."/>
            <person name="Berlin A."/>
            <person name="Borenstein D."/>
            <person name="Chen Z."/>
            <person name="Engels R."/>
            <person name="Freedman E."/>
            <person name="Gellesch M."/>
            <person name="Goldberg J."/>
            <person name="Griggs A."/>
            <person name="Gujja S."/>
            <person name="Heiman D."/>
            <person name="Hepburn T."/>
            <person name="Howarth C."/>
            <person name="Jen D."/>
            <person name="Larson L."/>
            <person name="Lewis B."/>
            <person name="Mehta T."/>
            <person name="Park D."/>
            <person name="Pearson M."/>
            <person name="Roberts A."/>
            <person name="Saif S."/>
            <person name="Shea T."/>
            <person name="Shenoy N."/>
            <person name="Sisk P."/>
            <person name="Stolte C."/>
            <person name="Sykes S."/>
            <person name="Walk T."/>
            <person name="White J."/>
            <person name="Yandava C."/>
            <person name="Klein B."/>
            <person name="McEwen J.G."/>
            <person name="Puccia R."/>
            <person name="Goldman G.H."/>
            <person name="Felipe M.S."/>
            <person name="Nino-Vega G."/>
            <person name="San-Blas G."/>
            <person name="Taylor J."/>
            <person name="Mendoza L."/>
            <person name="Galagan J.E."/>
            <person name="Nusbaum C."/>
            <person name="Birren B.W."/>
        </authorList>
    </citation>
    <scope>NUCLEOTIDE SEQUENCE [LARGE SCALE GENOMIC DNA]</scope>
    <source>
        <strain>G186AR / H82 / ATCC MYA-2454 / RMSCC 2432</strain>
    </source>
</reference>
<protein>
    <recommendedName>
        <fullName evidence="1">Maintenance of mitochondrial morphology protein 1</fullName>
    </recommendedName>
</protein>
<gene>
    <name evidence="1" type="primary">MMM1</name>
    <name type="ORF">HCBG_08673</name>
</gene>
<keyword id="KW-0256">Endoplasmic reticulum</keyword>
<keyword id="KW-0445">Lipid transport</keyword>
<keyword id="KW-0446">Lipid-binding</keyword>
<keyword id="KW-0472">Membrane</keyword>
<keyword id="KW-1185">Reference proteome</keyword>
<keyword id="KW-0812">Transmembrane</keyword>
<keyword id="KW-1133">Transmembrane helix</keyword>
<keyword id="KW-0813">Transport</keyword>
<dbReference type="EMBL" id="GG663379">
    <property type="protein sequence ID" value="EEH03033.1"/>
    <property type="molecule type" value="Genomic_DNA"/>
</dbReference>
<dbReference type="SMR" id="C0NZU3"/>
<dbReference type="FunCoup" id="C0NZU3">
    <property type="interactions" value="63"/>
</dbReference>
<dbReference type="STRING" id="447093.C0NZU3"/>
<dbReference type="HOGENOM" id="CLU_032730_2_0_1"/>
<dbReference type="InParanoid" id="C0NZU3"/>
<dbReference type="Proteomes" id="UP000001631">
    <property type="component" value="Unassembled WGS sequence"/>
</dbReference>
<dbReference type="GO" id="GO:0005789">
    <property type="term" value="C:endoplasmic reticulum membrane"/>
    <property type="evidence" value="ECO:0007669"/>
    <property type="project" value="UniProtKB-SubCell"/>
</dbReference>
<dbReference type="GO" id="GO:0032865">
    <property type="term" value="C:ERMES complex"/>
    <property type="evidence" value="ECO:0007669"/>
    <property type="project" value="UniProtKB-UniRule"/>
</dbReference>
<dbReference type="GO" id="GO:0008289">
    <property type="term" value="F:lipid binding"/>
    <property type="evidence" value="ECO:0007669"/>
    <property type="project" value="UniProtKB-KW"/>
</dbReference>
<dbReference type="GO" id="GO:0000002">
    <property type="term" value="P:mitochondrial genome maintenance"/>
    <property type="evidence" value="ECO:0007669"/>
    <property type="project" value="UniProtKB-UniRule"/>
</dbReference>
<dbReference type="GO" id="GO:1990456">
    <property type="term" value="P:mitochondrion-endoplasmic reticulum membrane tethering"/>
    <property type="evidence" value="ECO:0007669"/>
    <property type="project" value="TreeGrafter"/>
</dbReference>
<dbReference type="GO" id="GO:0015914">
    <property type="term" value="P:phospholipid transport"/>
    <property type="evidence" value="ECO:0007669"/>
    <property type="project" value="TreeGrafter"/>
</dbReference>
<dbReference type="GO" id="GO:0045040">
    <property type="term" value="P:protein insertion into mitochondrial outer membrane"/>
    <property type="evidence" value="ECO:0007669"/>
    <property type="project" value="UniProtKB-UniRule"/>
</dbReference>
<dbReference type="CDD" id="cd21671">
    <property type="entry name" value="SMP_Mmm1"/>
    <property type="match status" value="1"/>
</dbReference>
<dbReference type="HAMAP" id="MF_03103">
    <property type="entry name" value="Mmm1"/>
    <property type="match status" value="1"/>
</dbReference>
<dbReference type="InterPro" id="IPR027537">
    <property type="entry name" value="Mmm1"/>
</dbReference>
<dbReference type="InterPro" id="IPR019411">
    <property type="entry name" value="MMM1_dom"/>
</dbReference>
<dbReference type="InterPro" id="IPR031468">
    <property type="entry name" value="SMP_LBD"/>
</dbReference>
<dbReference type="PANTHER" id="PTHR13466:SF0">
    <property type="entry name" value="SMP-LTD DOMAIN-CONTAINING PROTEIN"/>
    <property type="match status" value="1"/>
</dbReference>
<dbReference type="PANTHER" id="PTHR13466">
    <property type="entry name" value="TEX2 PROTEIN-RELATED"/>
    <property type="match status" value="1"/>
</dbReference>
<dbReference type="Pfam" id="PF10296">
    <property type="entry name" value="MMM1"/>
    <property type="match status" value="1"/>
</dbReference>
<dbReference type="PROSITE" id="PS51847">
    <property type="entry name" value="SMP"/>
    <property type="match status" value="1"/>
</dbReference>